<protein>
    <recommendedName>
        <fullName>Golgi apparatus membrane protein tvp23</fullName>
    </recommendedName>
</protein>
<comment type="function">
    <text evidence="1">Golgi membrane protein involved in vesicular trafficking.</text>
</comment>
<comment type="subcellular location">
    <subcellularLocation>
        <location evidence="1">Golgi apparatus membrane</location>
        <topology evidence="1">Multi-pass membrane protein</topology>
    </subcellularLocation>
</comment>
<comment type="similarity">
    <text evidence="3">Belongs to the TVP23 family.</text>
</comment>
<comment type="sequence caution" evidence="3">
    <conflict type="erroneous gene model prediction">
        <sequence resource="EMBL-CDS" id="EAU36461"/>
    </conflict>
</comment>
<evidence type="ECO:0000250" key="1"/>
<evidence type="ECO:0000255" key="2"/>
<evidence type="ECO:0000305" key="3"/>
<reference key="1">
    <citation type="submission" date="2005-09" db="EMBL/GenBank/DDBJ databases">
        <title>Annotation of the Aspergillus terreus NIH2624 genome.</title>
        <authorList>
            <person name="Birren B.W."/>
            <person name="Lander E.S."/>
            <person name="Galagan J.E."/>
            <person name="Nusbaum C."/>
            <person name="Devon K."/>
            <person name="Henn M."/>
            <person name="Ma L.-J."/>
            <person name="Jaffe D.B."/>
            <person name="Butler J."/>
            <person name="Alvarez P."/>
            <person name="Gnerre S."/>
            <person name="Grabherr M."/>
            <person name="Kleber M."/>
            <person name="Mauceli E.W."/>
            <person name="Brockman W."/>
            <person name="Rounsley S."/>
            <person name="Young S.K."/>
            <person name="LaButti K."/>
            <person name="Pushparaj V."/>
            <person name="DeCaprio D."/>
            <person name="Crawford M."/>
            <person name="Koehrsen M."/>
            <person name="Engels R."/>
            <person name="Montgomery P."/>
            <person name="Pearson M."/>
            <person name="Howarth C."/>
            <person name="Larson L."/>
            <person name="Luoma S."/>
            <person name="White J."/>
            <person name="Alvarado L."/>
            <person name="Kodira C.D."/>
            <person name="Zeng Q."/>
            <person name="Oleary S."/>
            <person name="Yandava C."/>
            <person name="Denning D.W."/>
            <person name="Nierman W.C."/>
            <person name="Milne T."/>
            <person name="Madden K."/>
        </authorList>
    </citation>
    <scope>NUCLEOTIDE SEQUENCE [LARGE SCALE GENOMIC DNA]</scope>
    <source>
        <strain>NIH 2624 / FGSC A1156</strain>
    </source>
</reference>
<organism>
    <name type="scientific">Aspergillus terreus (strain NIH 2624 / FGSC A1156)</name>
    <dbReference type="NCBI Taxonomy" id="341663"/>
    <lineage>
        <taxon>Eukaryota</taxon>
        <taxon>Fungi</taxon>
        <taxon>Dikarya</taxon>
        <taxon>Ascomycota</taxon>
        <taxon>Pezizomycotina</taxon>
        <taxon>Eurotiomycetes</taxon>
        <taxon>Eurotiomycetidae</taxon>
        <taxon>Eurotiales</taxon>
        <taxon>Aspergillaceae</taxon>
        <taxon>Aspergillus</taxon>
        <taxon>Aspergillus subgen. Circumdati</taxon>
    </lineage>
</organism>
<sequence>MEQEPLQPRQGDLNWRLSAHPVTLLCFLGIRLSALLMYLFGILFIKHFILVFIITLLLLAADFYYLKNIAGRRLVGLRWWNEVNTTTGDSHWVFESSDPNTRTITATDKRFFWLSLYVTPAFWIGLAILAVIQLSVIWLSLVVIALVLTITNTVAFSRCDRFSQASTFANRALSGGIVSNIAGGLLGRLFK</sequence>
<feature type="chain" id="PRO_0000343040" description="Golgi apparatus membrane protein tvp23">
    <location>
        <begin position="1"/>
        <end position="191"/>
    </location>
</feature>
<feature type="transmembrane region" description="Helical" evidence="2">
    <location>
        <begin position="17"/>
        <end position="37"/>
    </location>
</feature>
<feature type="transmembrane region" description="Helical" evidence="2">
    <location>
        <begin position="39"/>
        <end position="59"/>
    </location>
</feature>
<feature type="transmembrane region" description="Helical" evidence="2">
    <location>
        <begin position="111"/>
        <end position="133"/>
    </location>
</feature>
<feature type="transmembrane region" description="Helical" evidence="2">
    <location>
        <begin position="137"/>
        <end position="156"/>
    </location>
</feature>
<feature type="glycosylation site" description="N-linked (GlcNAc...) asparagine" evidence="2">
    <location>
        <position position="84"/>
    </location>
</feature>
<keyword id="KW-0325">Glycoprotein</keyword>
<keyword id="KW-0333">Golgi apparatus</keyword>
<keyword id="KW-0472">Membrane</keyword>
<keyword id="KW-1185">Reference proteome</keyword>
<keyword id="KW-0812">Transmembrane</keyword>
<keyword id="KW-1133">Transmembrane helix</keyword>
<dbReference type="EMBL" id="CH476597">
    <property type="protein sequence ID" value="EAU36461.1"/>
    <property type="status" value="ALT_SEQ"/>
    <property type="molecule type" value="Genomic_DNA"/>
</dbReference>
<dbReference type="RefSeq" id="XP_001212365.1">
    <property type="nucleotide sequence ID" value="XM_001212365.1"/>
</dbReference>
<dbReference type="STRING" id="341663.Q0CSZ7"/>
<dbReference type="GlyCosmos" id="Q0CSZ7">
    <property type="glycosylation" value="1 site, No reported glycans"/>
</dbReference>
<dbReference type="GeneID" id="4317834"/>
<dbReference type="eggNOG" id="KOG3195">
    <property type="taxonomic scope" value="Eukaryota"/>
</dbReference>
<dbReference type="OrthoDB" id="2151161at2759"/>
<dbReference type="Proteomes" id="UP000007963">
    <property type="component" value="Unassembled WGS sequence"/>
</dbReference>
<dbReference type="GO" id="GO:0000139">
    <property type="term" value="C:Golgi membrane"/>
    <property type="evidence" value="ECO:0007669"/>
    <property type="project" value="UniProtKB-SubCell"/>
</dbReference>
<dbReference type="GO" id="GO:0009306">
    <property type="term" value="P:protein secretion"/>
    <property type="evidence" value="ECO:0007669"/>
    <property type="project" value="TreeGrafter"/>
</dbReference>
<dbReference type="GO" id="GO:0016192">
    <property type="term" value="P:vesicle-mediated transport"/>
    <property type="evidence" value="ECO:0007669"/>
    <property type="project" value="EnsemblFungi"/>
</dbReference>
<dbReference type="InterPro" id="IPR008564">
    <property type="entry name" value="TVP23-like"/>
</dbReference>
<dbReference type="PANTHER" id="PTHR13019">
    <property type="entry name" value="GOLGI APPARATUS MEMBRANE PROTEIN TVP23"/>
    <property type="match status" value="1"/>
</dbReference>
<dbReference type="PANTHER" id="PTHR13019:SF7">
    <property type="entry name" value="GOLGI APPARATUS MEMBRANE PROTEIN TVP23"/>
    <property type="match status" value="1"/>
</dbReference>
<dbReference type="Pfam" id="PF05832">
    <property type="entry name" value="DUF846"/>
    <property type="match status" value="1"/>
</dbReference>
<name>TVP23_ASPTN</name>
<accession>Q0CSZ7</accession>
<proteinExistence type="inferred from homology"/>
<gene>
    <name type="primary">tvp23</name>
    <name type="ORF">ATEG_03187</name>
</gene>